<keyword id="KW-0025">Alternative splicing</keyword>
<keyword id="KW-1048">Host nucleus</keyword>
<keyword id="KW-0945">Host-virus interaction</keyword>
<keyword id="KW-0813">Transport</keyword>
<keyword id="KW-0946">Virion</keyword>
<feature type="chain" id="PRO_0000079006" description="Nuclear export protein">
    <location>
        <begin position="1"/>
        <end position="121"/>
    </location>
</feature>
<feature type="short sequence motif" description="Nuclear export signal" evidence="1">
    <location>
        <begin position="12"/>
        <end position="21"/>
    </location>
</feature>
<feature type="short sequence motif" description="Nuclear export signal" evidence="1">
    <location>
        <begin position="85"/>
        <end position="94"/>
    </location>
</feature>
<reference key="1">
    <citation type="journal article" date="1991" name="Virology">
        <title>Phylogenetic relationship of the nonstructural (NS) genes of influenza A viruses.</title>
        <authorList>
            <person name="Ludwig S."/>
            <person name="Schultz U."/>
            <person name="Mandler J."/>
            <person name="Fitch W.M."/>
            <person name="Scholtissek C."/>
        </authorList>
    </citation>
    <scope>NUCLEOTIDE SEQUENCE [GENOMIC RNA]</scope>
</reference>
<organismHost>
    <name type="scientific">Aves</name>
    <dbReference type="NCBI Taxonomy" id="8782"/>
</organismHost>
<organismHost>
    <name type="scientific">Homo sapiens</name>
    <name type="common">Human</name>
    <dbReference type="NCBI Taxonomy" id="9606"/>
</organismHost>
<organismHost>
    <name type="scientific">Sus scrofa</name>
    <name type="common">Pig</name>
    <dbReference type="NCBI Taxonomy" id="9823"/>
</organismHost>
<name>NEP_I82A8</name>
<proteinExistence type="inferred from homology"/>
<organism>
    <name type="scientific">Influenza A virus (strain A/Turkey/Bethlehem-Glilit/1492-B/1982 H1N1)</name>
    <dbReference type="NCBI Taxonomy" id="31663"/>
    <lineage>
        <taxon>Viruses</taxon>
        <taxon>Riboviria</taxon>
        <taxon>Orthornavirae</taxon>
        <taxon>Negarnaviricota</taxon>
        <taxon>Polyploviricotina</taxon>
        <taxon>Insthoviricetes</taxon>
        <taxon>Articulavirales</taxon>
        <taxon>Orthomyxoviridae</taxon>
        <taxon>Alphainfluenzavirus</taxon>
        <taxon>Alphainfluenzavirus influenzae</taxon>
        <taxon>Influenza A virus</taxon>
    </lineage>
</organism>
<protein>
    <recommendedName>
        <fullName evidence="1">Nuclear export protein</fullName>
        <shortName evidence="1">NEP</shortName>
    </recommendedName>
    <alternativeName>
        <fullName evidence="1">Non-structural protein 2</fullName>
        <shortName evidence="1">NS2</shortName>
    </alternativeName>
</protein>
<sequence length="121" mass="14300">MDSNTITSFQDILQRMSKMQLESSSADLNGMITQFERLKIYRDSLGESVMRMGDLHSLQNRNATWRDELSQKFEEIRWLIAECRNILTRTENSFEQITFLQALQLLLEVESEIRTFSFQLI</sequence>
<dbReference type="EMBL" id="M55467">
    <property type="protein sequence ID" value="ABG72674.1"/>
    <property type="molecule type" value="Genomic_RNA"/>
</dbReference>
<dbReference type="SMR" id="P30915"/>
<dbReference type="GO" id="GO:0042025">
    <property type="term" value="C:host cell nucleus"/>
    <property type="evidence" value="ECO:0007669"/>
    <property type="project" value="UniProtKB-SubCell"/>
</dbReference>
<dbReference type="GO" id="GO:0044423">
    <property type="term" value="C:virion component"/>
    <property type="evidence" value="ECO:0007669"/>
    <property type="project" value="UniProtKB-UniRule"/>
</dbReference>
<dbReference type="GO" id="GO:0039675">
    <property type="term" value="P:exit of virus from host cell nucleus through nuclear pore"/>
    <property type="evidence" value="ECO:0007669"/>
    <property type="project" value="UniProtKB-UniRule"/>
</dbReference>
<dbReference type="Gene3D" id="1.10.287.230">
    <property type="match status" value="1"/>
</dbReference>
<dbReference type="HAMAP" id="MF_04067">
    <property type="entry name" value="INFV_NEP"/>
    <property type="match status" value="1"/>
</dbReference>
<dbReference type="InterPro" id="IPR000968">
    <property type="entry name" value="Flu_NS2"/>
</dbReference>
<dbReference type="Pfam" id="PF00601">
    <property type="entry name" value="Flu_NS2"/>
    <property type="match status" value="1"/>
</dbReference>
<dbReference type="SUPFAM" id="SSF101156">
    <property type="entry name" value="Nonstructural protein ns2, Nep, M1-binding domain"/>
    <property type="match status" value="1"/>
</dbReference>
<accession>P30915</accession>
<accession>Q0PDL7</accession>
<comment type="function">
    <text evidence="1">Mediates the nuclear export of encapsidated genomic RNAs (ribonucleoproteins, RNPs). Acts as an adapter between viral RNPs complexes and the nuclear export machinery of the cell. Possesses no intrinsic RNA-binding activity, but includes a C-terminal M1-binding domain. This domain is believed to allow recognition of RNPs bound to the protein M1. Since protein M1 is not available in large quantities before late stages of infection, such an indirect recognition mechanism probably ensures that genomic RNPs are not exported from the host nucleus until sufficient quantities of viral mRNA and progeny genomic RNA have been synthesized. Furthermore, the RNPs enter the host cytoplasm only when associated with the M1 protein that is necessary to guide them to the plasma membrane. May down-regulate viral RNA synthesis when overproduced.</text>
</comment>
<comment type="subunit">
    <text evidence="1">Interacts with protein M1. May interact with host nucleoporin RAB/HRB and exportin XPO1/CRM1.</text>
</comment>
<comment type="subcellular location">
    <subcellularLocation>
        <location evidence="1">Virion</location>
    </subcellularLocation>
    <subcellularLocation>
        <location evidence="1">Host nucleus</location>
    </subcellularLocation>
</comment>
<comment type="alternative products">
    <event type="alternative splicing"/>
    <isoform>
        <id>P30915-1</id>
        <name>NEP</name>
        <name>NS2</name>
        <sequence type="displayed"/>
    </isoform>
    <isoform>
        <id>P30910-1</id>
        <name>NS1</name>
        <sequence type="external"/>
    </isoform>
</comment>
<comment type="miscellaneous">
    <text>Average number present in a viral particle is estimated to be 130-200 molecules.</text>
</comment>
<comment type="similarity">
    <text evidence="1">Belongs to the influenza viruses NEP family.</text>
</comment>
<gene>
    <name evidence="1" type="primary">NS</name>
</gene>
<evidence type="ECO:0000255" key="1">
    <source>
        <dbReference type="HAMAP-Rule" id="MF_04067"/>
    </source>
</evidence>